<dbReference type="EMBL" id="AF173229">
    <property type="protein sequence ID" value="AAD47279.1"/>
    <property type="molecule type" value="Genomic_DNA"/>
</dbReference>
<dbReference type="EMBL" id="AF173227">
    <property type="protein sequence ID" value="AAD47279.1"/>
    <property type="status" value="JOINED"/>
    <property type="molecule type" value="Genomic_DNA"/>
</dbReference>
<dbReference type="EMBL" id="AF173228">
    <property type="protein sequence ID" value="AAD47279.1"/>
    <property type="status" value="JOINED"/>
    <property type="molecule type" value="Genomic_DNA"/>
</dbReference>
<dbReference type="EMBL" id="AL096814">
    <property type="status" value="NOT_ANNOTATED_CDS"/>
    <property type="molecule type" value="Genomic_DNA"/>
</dbReference>
<dbReference type="CCDS" id="CCDS4865.1"/>
<dbReference type="RefSeq" id="NP_002089.4">
    <property type="nucleotide sequence ID" value="NM_002098.5"/>
</dbReference>
<dbReference type="SMR" id="Q9UMX6"/>
<dbReference type="BioGRID" id="109234">
    <property type="interactions" value="11"/>
</dbReference>
<dbReference type="FunCoup" id="Q9UMX6">
    <property type="interactions" value="29"/>
</dbReference>
<dbReference type="IntAct" id="Q9UMX6">
    <property type="interactions" value="7"/>
</dbReference>
<dbReference type="STRING" id="9606.ENSP00000230361"/>
<dbReference type="TCDB" id="8.A.82.2.9">
    <property type="family name" value="the calmodulin calcium binding protein (calmodulin) family"/>
</dbReference>
<dbReference type="iPTMnet" id="Q9UMX6"/>
<dbReference type="PhosphoSitePlus" id="Q9UMX6"/>
<dbReference type="BioMuta" id="GUCA1B"/>
<dbReference type="DMDM" id="116242507"/>
<dbReference type="MassIVE" id="Q9UMX6"/>
<dbReference type="PaxDb" id="9606-ENSP00000230361"/>
<dbReference type="PeptideAtlas" id="Q9UMX6"/>
<dbReference type="ProteomicsDB" id="85223"/>
<dbReference type="Antibodypedia" id="30141">
    <property type="antibodies" value="145 antibodies from 22 providers"/>
</dbReference>
<dbReference type="DNASU" id="2979"/>
<dbReference type="Ensembl" id="ENST00000230361.4">
    <property type="protein sequence ID" value="ENSP00000230361.3"/>
    <property type="gene ID" value="ENSG00000112599.9"/>
</dbReference>
<dbReference type="GeneID" id="2979"/>
<dbReference type="KEGG" id="hsa:2979"/>
<dbReference type="MANE-Select" id="ENST00000230361.4">
    <property type="protein sequence ID" value="ENSP00000230361.3"/>
    <property type="RefSeq nucleotide sequence ID" value="NM_002098.6"/>
    <property type="RefSeq protein sequence ID" value="NP_002089.4"/>
</dbReference>
<dbReference type="UCSC" id="uc003orz.4">
    <property type="organism name" value="human"/>
</dbReference>
<dbReference type="AGR" id="HGNC:4679"/>
<dbReference type="CTD" id="2979"/>
<dbReference type="DisGeNET" id="2979"/>
<dbReference type="GeneCards" id="GUCA1B"/>
<dbReference type="GeneReviews" id="GUCA1B"/>
<dbReference type="HGNC" id="HGNC:4679">
    <property type="gene designation" value="GUCA1B"/>
</dbReference>
<dbReference type="HPA" id="ENSG00000112599">
    <property type="expression patterns" value="Tissue enriched (retina)"/>
</dbReference>
<dbReference type="MalaCards" id="GUCA1B"/>
<dbReference type="MIM" id="602275">
    <property type="type" value="gene"/>
</dbReference>
<dbReference type="MIM" id="613827">
    <property type="type" value="phenotype"/>
</dbReference>
<dbReference type="neXtProt" id="NX_Q9UMX6"/>
<dbReference type="OpenTargets" id="ENSG00000112599"/>
<dbReference type="Orphanet" id="791">
    <property type="disease" value="Retinitis pigmentosa"/>
</dbReference>
<dbReference type="PharmGKB" id="PA29063"/>
<dbReference type="VEuPathDB" id="HostDB:ENSG00000112599"/>
<dbReference type="eggNOG" id="KOG0044">
    <property type="taxonomic scope" value="Eukaryota"/>
</dbReference>
<dbReference type="GeneTree" id="ENSGT00940000157530"/>
<dbReference type="HOGENOM" id="CLU_072366_4_0_1"/>
<dbReference type="InParanoid" id="Q9UMX6"/>
<dbReference type="OMA" id="LRWTFKI"/>
<dbReference type="OrthoDB" id="191686at2759"/>
<dbReference type="PAN-GO" id="Q9UMX6">
    <property type="GO annotations" value="6 GO annotations based on evolutionary models"/>
</dbReference>
<dbReference type="PhylomeDB" id="Q9UMX6"/>
<dbReference type="TreeFam" id="TF333971"/>
<dbReference type="PathwayCommons" id="Q9UMX6"/>
<dbReference type="Reactome" id="R-HSA-2514859">
    <property type="pathway name" value="Inactivation, recovery and regulation of the phototransduction cascade"/>
</dbReference>
<dbReference type="SignaLink" id="Q9UMX6"/>
<dbReference type="BioGRID-ORCS" id="2979">
    <property type="hits" value="9 hits in 1150 CRISPR screens"/>
</dbReference>
<dbReference type="GeneWiki" id="GUCA1B"/>
<dbReference type="GenomeRNAi" id="2979"/>
<dbReference type="Pharos" id="Q9UMX6">
    <property type="development level" value="Tbio"/>
</dbReference>
<dbReference type="PRO" id="PR:Q9UMX6"/>
<dbReference type="Proteomes" id="UP000005640">
    <property type="component" value="Chromosome 6"/>
</dbReference>
<dbReference type="RNAct" id="Q9UMX6">
    <property type="molecule type" value="protein"/>
</dbReference>
<dbReference type="Bgee" id="ENSG00000112599">
    <property type="expression patterns" value="Expressed in male germ line stem cell (sensu Vertebrata) in testis and 123 other cell types or tissues"/>
</dbReference>
<dbReference type="GO" id="GO:0036064">
    <property type="term" value="C:ciliary basal body"/>
    <property type="evidence" value="ECO:0000314"/>
    <property type="project" value="HPA"/>
</dbReference>
<dbReference type="GO" id="GO:0005929">
    <property type="term" value="C:cilium"/>
    <property type="evidence" value="ECO:0000314"/>
    <property type="project" value="HPA"/>
</dbReference>
<dbReference type="GO" id="GO:0120199">
    <property type="term" value="C:cone photoreceptor outer segment"/>
    <property type="evidence" value="ECO:0000314"/>
    <property type="project" value="UniProtKB"/>
</dbReference>
<dbReference type="GO" id="GO:0015630">
    <property type="term" value="C:microtubule cytoskeleton"/>
    <property type="evidence" value="ECO:0000314"/>
    <property type="project" value="HPA"/>
</dbReference>
<dbReference type="GO" id="GO:0031965">
    <property type="term" value="C:nuclear membrane"/>
    <property type="evidence" value="ECO:0000314"/>
    <property type="project" value="HPA"/>
</dbReference>
<dbReference type="GO" id="GO:0005654">
    <property type="term" value="C:nucleoplasm"/>
    <property type="evidence" value="ECO:0000314"/>
    <property type="project" value="HPA"/>
</dbReference>
<dbReference type="GO" id="GO:0097381">
    <property type="term" value="C:photoreceptor disc membrane"/>
    <property type="evidence" value="ECO:0000304"/>
    <property type="project" value="Reactome"/>
</dbReference>
<dbReference type="GO" id="GO:0001917">
    <property type="term" value="C:photoreceptor inner segment"/>
    <property type="evidence" value="ECO:0000314"/>
    <property type="project" value="UniProtKB"/>
</dbReference>
<dbReference type="GO" id="GO:0005886">
    <property type="term" value="C:plasma membrane"/>
    <property type="evidence" value="ECO:0007669"/>
    <property type="project" value="UniProtKB-SubCell"/>
</dbReference>
<dbReference type="GO" id="GO:0005509">
    <property type="term" value="F:calcium ion binding"/>
    <property type="evidence" value="ECO:0000318"/>
    <property type="project" value="GO_Central"/>
</dbReference>
<dbReference type="GO" id="GO:0008048">
    <property type="term" value="F:calcium sensitive guanylate cyclase activator activity"/>
    <property type="evidence" value="ECO:0000318"/>
    <property type="project" value="GO_Central"/>
</dbReference>
<dbReference type="GO" id="GO:0007589">
    <property type="term" value="P:body fluid secretion"/>
    <property type="evidence" value="ECO:0000304"/>
    <property type="project" value="ProtInc"/>
</dbReference>
<dbReference type="GO" id="GO:0007267">
    <property type="term" value="P:cell-cell signaling"/>
    <property type="evidence" value="ECO:0000304"/>
    <property type="project" value="ProtInc"/>
</dbReference>
<dbReference type="GO" id="GO:0007602">
    <property type="term" value="P:phototransduction"/>
    <property type="evidence" value="ECO:0007669"/>
    <property type="project" value="Ensembl"/>
</dbReference>
<dbReference type="GO" id="GO:0007168">
    <property type="term" value="P:receptor guanylyl cyclase signaling pathway"/>
    <property type="evidence" value="ECO:0000304"/>
    <property type="project" value="ProtInc"/>
</dbReference>
<dbReference type="GO" id="GO:0009966">
    <property type="term" value="P:regulation of signal transduction"/>
    <property type="evidence" value="ECO:0000318"/>
    <property type="project" value="GO_Central"/>
</dbReference>
<dbReference type="GO" id="GO:0007601">
    <property type="term" value="P:visual perception"/>
    <property type="evidence" value="ECO:0000318"/>
    <property type="project" value="GO_Central"/>
</dbReference>
<dbReference type="CDD" id="cd00051">
    <property type="entry name" value="EFh"/>
    <property type="match status" value="2"/>
</dbReference>
<dbReference type="FunFam" id="1.10.238.10:FF:000052">
    <property type="entry name" value="Guanylate cyclase activator 1A"/>
    <property type="match status" value="1"/>
</dbReference>
<dbReference type="Gene3D" id="1.10.238.10">
    <property type="entry name" value="EF-hand"/>
    <property type="match status" value="2"/>
</dbReference>
<dbReference type="InterPro" id="IPR011992">
    <property type="entry name" value="EF-hand-dom_pair"/>
</dbReference>
<dbReference type="InterPro" id="IPR018247">
    <property type="entry name" value="EF_Hand_1_Ca_BS"/>
</dbReference>
<dbReference type="InterPro" id="IPR002048">
    <property type="entry name" value="EF_hand_dom"/>
</dbReference>
<dbReference type="InterPro" id="IPR028846">
    <property type="entry name" value="Recoverin"/>
</dbReference>
<dbReference type="PANTHER" id="PTHR23055">
    <property type="entry name" value="CALCIUM BINDING PROTEINS"/>
    <property type="match status" value="1"/>
</dbReference>
<dbReference type="PANTHER" id="PTHR23055:SF11">
    <property type="entry name" value="GUANYLYL CYCLASE-ACTIVATING PROTEIN 2"/>
    <property type="match status" value="1"/>
</dbReference>
<dbReference type="Pfam" id="PF13499">
    <property type="entry name" value="EF-hand_7"/>
    <property type="match status" value="2"/>
</dbReference>
<dbReference type="PRINTS" id="PR00450">
    <property type="entry name" value="RECOVERIN"/>
</dbReference>
<dbReference type="SMART" id="SM00054">
    <property type="entry name" value="EFh"/>
    <property type="match status" value="3"/>
</dbReference>
<dbReference type="SUPFAM" id="SSF47473">
    <property type="entry name" value="EF-hand"/>
    <property type="match status" value="1"/>
</dbReference>
<dbReference type="PROSITE" id="PS00018">
    <property type="entry name" value="EF_HAND_1"/>
    <property type="match status" value="3"/>
</dbReference>
<dbReference type="PROSITE" id="PS50222">
    <property type="entry name" value="EF_HAND_2"/>
    <property type="match status" value="4"/>
</dbReference>
<feature type="initiator methionine" description="Removed">
    <location>
        <position position="1"/>
    </location>
</feature>
<feature type="chain" id="PRO_0000073808" description="Guanylyl cyclase-activating protein 2">
    <location>
        <begin position="2"/>
        <end position="200"/>
    </location>
</feature>
<feature type="domain" description="EF-hand 1" evidence="4">
    <location>
        <begin position="14"/>
        <end position="31"/>
    </location>
</feature>
<feature type="domain" description="EF-hand 2" evidence="4">
    <location>
        <begin position="53"/>
        <end position="88"/>
    </location>
</feature>
<feature type="domain" description="EF-hand 3" evidence="4">
    <location>
        <begin position="89"/>
        <end position="124"/>
    </location>
</feature>
<feature type="domain" description="EF-hand 4" evidence="4">
    <location>
        <begin position="141"/>
        <end position="176"/>
    </location>
</feature>
<feature type="binding site" evidence="4">
    <location>
        <position position="66"/>
    </location>
    <ligand>
        <name>Ca(2+)</name>
        <dbReference type="ChEBI" id="CHEBI:29108"/>
        <label>1</label>
    </ligand>
</feature>
<feature type="binding site" evidence="4">
    <location>
        <position position="68"/>
    </location>
    <ligand>
        <name>Ca(2+)</name>
        <dbReference type="ChEBI" id="CHEBI:29108"/>
        <label>1</label>
    </ligand>
</feature>
<feature type="binding site" evidence="4">
    <location>
        <position position="70"/>
    </location>
    <ligand>
        <name>Ca(2+)</name>
        <dbReference type="ChEBI" id="CHEBI:29108"/>
        <label>1</label>
    </ligand>
</feature>
<feature type="binding site" evidence="4">
    <location>
        <position position="72"/>
    </location>
    <ligand>
        <name>Ca(2+)</name>
        <dbReference type="ChEBI" id="CHEBI:29108"/>
        <label>1</label>
    </ligand>
</feature>
<feature type="binding site" evidence="4">
    <location>
        <position position="77"/>
    </location>
    <ligand>
        <name>Ca(2+)</name>
        <dbReference type="ChEBI" id="CHEBI:29108"/>
        <label>1</label>
    </ligand>
</feature>
<feature type="binding site" evidence="4">
    <location>
        <position position="102"/>
    </location>
    <ligand>
        <name>Ca(2+)</name>
        <dbReference type="ChEBI" id="CHEBI:29108"/>
        <label>2</label>
    </ligand>
</feature>
<feature type="binding site" evidence="4">
    <location>
        <position position="104"/>
    </location>
    <ligand>
        <name>Ca(2+)</name>
        <dbReference type="ChEBI" id="CHEBI:29108"/>
        <label>2</label>
    </ligand>
</feature>
<feature type="binding site" evidence="4">
    <location>
        <position position="106"/>
    </location>
    <ligand>
        <name>Ca(2+)</name>
        <dbReference type="ChEBI" id="CHEBI:29108"/>
        <label>2</label>
    </ligand>
</feature>
<feature type="binding site" evidence="4">
    <location>
        <position position="108"/>
    </location>
    <ligand>
        <name>Ca(2+)</name>
        <dbReference type="ChEBI" id="CHEBI:29108"/>
        <label>2</label>
    </ligand>
</feature>
<feature type="binding site" evidence="4">
    <location>
        <position position="113"/>
    </location>
    <ligand>
        <name>Ca(2+)</name>
        <dbReference type="ChEBI" id="CHEBI:29108"/>
        <label>2</label>
    </ligand>
</feature>
<feature type="binding site" evidence="4">
    <location>
        <position position="154"/>
    </location>
    <ligand>
        <name>Ca(2+)</name>
        <dbReference type="ChEBI" id="CHEBI:29108"/>
        <label>3</label>
    </ligand>
</feature>
<feature type="binding site" evidence="4">
    <location>
        <position position="156"/>
    </location>
    <ligand>
        <name>Ca(2+)</name>
        <dbReference type="ChEBI" id="CHEBI:29108"/>
        <label>3</label>
    </ligand>
</feature>
<feature type="binding site" evidence="4">
    <location>
        <position position="158"/>
    </location>
    <ligand>
        <name>Ca(2+)</name>
        <dbReference type="ChEBI" id="CHEBI:29108"/>
        <label>3</label>
    </ligand>
</feature>
<feature type="binding site" evidence="4">
    <location>
        <position position="160"/>
    </location>
    <ligand>
        <name>Ca(2+)</name>
        <dbReference type="ChEBI" id="CHEBI:29108"/>
        <label>3</label>
    </ligand>
</feature>
<feature type="binding site" evidence="4">
    <location>
        <position position="165"/>
    </location>
    <ligand>
        <name>Ca(2+)</name>
        <dbReference type="ChEBI" id="CHEBI:29108"/>
        <label>3</label>
    </ligand>
</feature>
<feature type="lipid moiety-binding region" description="N-myristoyl glycine" evidence="1">
    <location>
        <position position="2"/>
    </location>
</feature>
<feature type="sequence variant" id="VAR_009127" description="In dbSNP:rs139923590." evidence="5">
    <original>E</original>
    <variation>D</variation>
    <location>
        <position position="155"/>
    </location>
</feature>
<feature type="sequence variant" id="VAR_065355" description="In RP48; dbSNP:rs121909124." evidence="6">
    <original>G</original>
    <variation>R</variation>
    <location>
        <position position="157"/>
    </location>
</feature>
<feature type="sequence conflict" description="In Ref. 1; AAD47279." evidence="8" ref="1">
    <original>G</original>
    <variation>D</variation>
    <location>
        <position position="137"/>
    </location>
</feature>
<reference key="1">
    <citation type="journal article" date="1997" name="Genomics">
        <title>The human GCAP1 and GCAP2 genes are arranged in a tail-to-tail array on the short arm of chromosome 6 (p21.1).</title>
        <authorList>
            <person name="Surguchov A."/>
            <person name="Bronson J.D."/>
            <person name="Banerjee P."/>
            <person name="Knowles J.A."/>
            <person name="Ruiz C."/>
            <person name="Subbaraya I."/>
            <person name="Palczewski K."/>
            <person name="Baehr W."/>
        </authorList>
    </citation>
    <scope>NUCLEOTIDE SEQUENCE [GENOMIC DNA]</scope>
</reference>
<reference key="2">
    <citation type="journal article" date="2003" name="Nature">
        <title>The DNA sequence and analysis of human chromosome 6.</title>
        <authorList>
            <person name="Mungall A.J."/>
            <person name="Palmer S.A."/>
            <person name="Sims S.K."/>
            <person name="Edwards C.A."/>
            <person name="Ashurst J.L."/>
            <person name="Wilming L."/>
            <person name="Jones M.C."/>
            <person name="Horton R."/>
            <person name="Hunt S.E."/>
            <person name="Scott C.E."/>
            <person name="Gilbert J.G.R."/>
            <person name="Clamp M.E."/>
            <person name="Bethel G."/>
            <person name="Milne S."/>
            <person name="Ainscough R."/>
            <person name="Almeida J.P."/>
            <person name="Ambrose K.D."/>
            <person name="Andrews T.D."/>
            <person name="Ashwell R.I.S."/>
            <person name="Babbage A.K."/>
            <person name="Bagguley C.L."/>
            <person name="Bailey J."/>
            <person name="Banerjee R."/>
            <person name="Barker D.J."/>
            <person name="Barlow K.F."/>
            <person name="Bates K."/>
            <person name="Beare D.M."/>
            <person name="Beasley H."/>
            <person name="Beasley O."/>
            <person name="Bird C.P."/>
            <person name="Blakey S.E."/>
            <person name="Bray-Allen S."/>
            <person name="Brook J."/>
            <person name="Brown A.J."/>
            <person name="Brown J.Y."/>
            <person name="Burford D.C."/>
            <person name="Burrill W."/>
            <person name="Burton J."/>
            <person name="Carder C."/>
            <person name="Carter N.P."/>
            <person name="Chapman J.C."/>
            <person name="Clark S.Y."/>
            <person name="Clark G."/>
            <person name="Clee C.M."/>
            <person name="Clegg S."/>
            <person name="Cobley V."/>
            <person name="Collier R.E."/>
            <person name="Collins J.E."/>
            <person name="Colman L.K."/>
            <person name="Corby N.R."/>
            <person name="Coville G.J."/>
            <person name="Culley K.M."/>
            <person name="Dhami P."/>
            <person name="Davies J."/>
            <person name="Dunn M."/>
            <person name="Earthrowl M.E."/>
            <person name="Ellington A.E."/>
            <person name="Evans K.A."/>
            <person name="Faulkner L."/>
            <person name="Francis M.D."/>
            <person name="Frankish A."/>
            <person name="Frankland J."/>
            <person name="French L."/>
            <person name="Garner P."/>
            <person name="Garnett J."/>
            <person name="Ghori M.J."/>
            <person name="Gilby L.M."/>
            <person name="Gillson C.J."/>
            <person name="Glithero R.J."/>
            <person name="Grafham D.V."/>
            <person name="Grant M."/>
            <person name="Gribble S."/>
            <person name="Griffiths C."/>
            <person name="Griffiths M.N.D."/>
            <person name="Hall R."/>
            <person name="Halls K.S."/>
            <person name="Hammond S."/>
            <person name="Harley J.L."/>
            <person name="Hart E.A."/>
            <person name="Heath P.D."/>
            <person name="Heathcott R."/>
            <person name="Holmes S.J."/>
            <person name="Howden P.J."/>
            <person name="Howe K.L."/>
            <person name="Howell G.R."/>
            <person name="Huckle E."/>
            <person name="Humphray S.J."/>
            <person name="Humphries M.D."/>
            <person name="Hunt A.R."/>
            <person name="Johnson C.M."/>
            <person name="Joy A.A."/>
            <person name="Kay M."/>
            <person name="Keenan S.J."/>
            <person name="Kimberley A.M."/>
            <person name="King A."/>
            <person name="Laird G.K."/>
            <person name="Langford C."/>
            <person name="Lawlor S."/>
            <person name="Leongamornlert D.A."/>
            <person name="Leversha M."/>
            <person name="Lloyd C.R."/>
            <person name="Lloyd D.M."/>
            <person name="Loveland J.E."/>
            <person name="Lovell J."/>
            <person name="Martin S."/>
            <person name="Mashreghi-Mohammadi M."/>
            <person name="Maslen G.L."/>
            <person name="Matthews L."/>
            <person name="McCann O.T."/>
            <person name="McLaren S.J."/>
            <person name="McLay K."/>
            <person name="McMurray A."/>
            <person name="Moore M.J.F."/>
            <person name="Mullikin J.C."/>
            <person name="Niblett D."/>
            <person name="Nickerson T."/>
            <person name="Novik K.L."/>
            <person name="Oliver K."/>
            <person name="Overton-Larty E.K."/>
            <person name="Parker A."/>
            <person name="Patel R."/>
            <person name="Pearce A.V."/>
            <person name="Peck A.I."/>
            <person name="Phillimore B.J.C.T."/>
            <person name="Phillips S."/>
            <person name="Plumb R.W."/>
            <person name="Porter K.M."/>
            <person name="Ramsey Y."/>
            <person name="Ranby S.A."/>
            <person name="Rice C.M."/>
            <person name="Ross M.T."/>
            <person name="Searle S.M."/>
            <person name="Sehra H.K."/>
            <person name="Sheridan E."/>
            <person name="Skuce C.D."/>
            <person name="Smith S."/>
            <person name="Smith M."/>
            <person name="Spraggon L."/>
            <person name="Squares S.L."/>
            <person name="Steward C.A."/>
            <person name="Sycamore N."/>
            <person name="Tamlyn-Hall G."/>
            <person name="Tester J."/>
            <person name="Theaker A.J."/>
            <person name="Thomas D.W."/>
            <person name="Thorpe A."/>
            <person name="Tracey A."/>
            <person name="Tromans A."/>
            <person name="Tubby B."/>
            <person name="Wall M."/>
            <person name="Wallis J.M."/>
            <person name="West A.P."/>
            <person name="White S.S."/>
            <person name="Whitehead S.L."/>
            <person name="Whittaker H."/>
            <person name="Wild A."/>
            <person name="Willey D.J."/>
            <person name="Wilmer T.E."/>
            <person name="Wood J.M."/>
            <person name="Wray P.W."/>
            <person name="Wyatt J.C."/>
            <person name="Young L."/>
            <person name="Younger R.M."/>
            <person name="Bentley D.R."/>
            <person name="Coulson A."/>
            <person name="Durbin R.M."/>
            <person name="Hubbard T."/>
            <person name="Sulston J.E."/>
            <person name="Dunham I."/>
            <person name="Rogers J."/>
            <person name="Beck S."/>
        </authorList>
    </citation>
    <scope>NUCLEOTIDE SEQUENCE [LARGE SCALE GENOMIC DNA]</scope>
</reference>
<reference key="3">
    <citation type="journal article" date="1998" name="Invest. Ophthalmol. Vis. Sci.">
        <title>The localization of guanylyl cyclase-activating proteins in the mammalian retina.</title>
        <authorList>
            <person name="Cuenca N."/>
            <person name="Lopez S."/>
            <person name="Howes K."/>
            <person name="Kolb H."/>
        </authorList>
    </citation>
    <scope>TISSUE SPECIFICITY</scope>
    <scope>SUBCELLULAR LOCATION</scope>
</reference>
<reference key="4">
    <citation type="journal article" date="1999" name="J. Med. Genet.">
        <title>Genetic analysis of the guanylate cyclase activator 1B (GUCA1B) gene in patients with autosomal dominant retinal dystrophies.</title>
        <authorList>
            <person name="Payne A.M."/>
            <person name="Downes S.M."/>
            <person name="Bessant D.A.R."/>
            <person name="Plant C."/>
            <person name="Moore T."/>
            <person name="Bird A.C."/>
            <person name="Bhattacharya S.S."/>
        </authorList>
    </citation>
    <scope>VARIANT ASP-155</scope>
</reference>
<reference key="5">
    <citation type="journal article" date="2005" name="Graefes Arch. Clin. Exp. Ophthalmol.">
        <title>Mutations in the gene coding for guanylate cyclase-activating protein 2 (GUCA1B gene) in patients with autosomal dominant retinal dystrophies.</title>
        <authorList>
            <person name="Sato M."/>
            <person name="Nakazawa M."/>
            <person name="Usui T."/>
            <person name="Tanimoto N."/>
            <person name="Abe H."/>
            <person name="Ohguro H."/>
        </authorList>
    </citation>
    <scope>VARIANT RP48 ARG-157</scope>
</reference>
<protein>
    <recommendedName>
        <fullName>Guanylyl cyclase-activating protein 2</fullName>
        <shortName>GCAP 2</shortName>
    </recommendedName>
    <alternativeName>
        <fullName>Guanylate cyclase activator 1B</fullName>
    </alternativeName>
</protein>
<name>GUC1B_HUMAN</name>
<sequence length="200" mass="23420">MGQEFSWEEAEAAGEIDVAELQEWYKKFVMECPSGTLFMHEFKRFFKVTDDEEASQYVEGMFRAFDKNGDNTIDFLEYVAALNLVLRGTLEHKLKWTFKIYDKDGNGCIDRLELLNIVEGIYQLKKACRRELQTEQGQLLTPEEVVDRIFLLVDENGDGQLSLNEFVEGARRDKWVMKMLQMDMNPSSWLAQQRRKSAMF</sequence>
<keyword id="KW-0106">Calcium</keyword>
<keyword id="KW-1003">Cell membrane</keyword>
<keyword id="KW-0966">Cell projection</keyword>
<keyword id="KW-0225">Disease variant</keyword>
<keyword id="KW-0449">Lipoprotein</keyword>
<keyword id="KW-0472">Membrane</keyword>
<keyword id="KW-0479">Metal-binding</keyword>
<keyword id="KW-0519">Myristate</keyword>
<keyword id="KW-1267">Proteomics identification</keyword>
<keyword id="KW-1185">Reference proteome</keyword>
<keyword id="KW-0677">Repeat</keyword>
<keyword id="KW-0682">Retinitis pigmentosa</keyword>
<keyword id="KW-0716">Sensory transduction</keyword>
<keyword id="KW-0844">Vision</keyword>
<gene>
    <name type="primary">GUCA1B</name>
    <name type="synonym">GCAP2</name>
</gene>
<comment type="function">
    <text evidence="2 3">Stimulates two retinal guanylyl cyclases (GCs) GUCY2D and GUCY2F when free calcium ions concentration is low, and inhibits GUCY2D and GUCY2F when free calcium ions concentration is elevated (By similarity). This Ca(2+)-sensitive regulation of GCs is a key event in recovery of the dark state of rod photoreceptors following light exposure (By similarity). May be involved in cone photoreceptor response and recovery of response in bright light (By similarity).</text>
</comment>
<comment type="interaction">
    <interactant intactId="EBI-12896859">
        <id>Q9UMX6</id>
    </interactant>
    <interactant intactId="EBI-9087860">
        <id>P32243-2</id>
        <label>OTX2</label>
    </interactant>
    <organismsDiffer>false</organismsDiffer>
    <experiments>3</experiments>
</comment>
<comment type="subcellular location">
    <subcellularLocation>
        <location evidence="2">Cell membrane</location>
        <topology evidence="2">Lipid-anchor</topology>
    </subcellularLocation>
    <subcellularLocation>
        <location evidence="7">Photoreceptor inner segment</location>
    </subcellularLocation>
    <subcellularLocation>
        <location evidence="7">Cell projection</location>
        <location evidence="7">Cilium</location>
        <location evidence="7">Photoreceptor outer segment</location>
    </subcellularLocation>
    <text evidence="3">Subcellular location is not affected by light or dark conditions.</text>
</comment>
<comment type="tissue specificity">
    <text evidence="7">In the retina, it is expressed in cone and rod photoreceptor cells.</text>
</comment>
<comment type="PTM">
    <text evidence="2">The N-terminus is blocked.</text>
</comment>
<comment type="disease" evidence="6">
    <disease id="DI-03035">
        <name>Retinitis pigmentosa 48</name>
        <acronym>RP48</acronym>
        <description>A retinal dystrophy belonging to the group of pigmentary retinopathies. Retinitis pigmentosa is characterized by retinal pigment deposits visible on fundus examination and primary loss of rod photoreceptor cells followed by secondary loss of cone photoreceptors. Patients typically have night vision blindness and loss of midperipheral visual field. As their condition progresses, they lose their far peripheral visual field and eventually central vision as well.</description>
        <dbReference type="MIM" id="613827"/>
    </disease>
    <text>The disease is caused by variants affecting the gene represented in this entry.</text>
</comment>
<comment type="miscellaneous">
    <text evidence="1">Binds three calcium ions.</text>
</comment>
<proteinExistence type="evidence at protein level"/>
<organism>
    <name type="scientific">Homo sapiens</name>
    <name type="common">Human</name>
    <dbReference type="NCBI Taxonomy" id="9606"/>
    <lineage>
        <taxon>Eukaryota</taxon>
        <taxon>Metazoa</taxon>
        <taxon>Chordata</taxon>
        <taxon>Craniata</taxon>
        <taxon>Vertebrata</taxon>
        <taxon>Euteleostomi</taxon>
        <taxon>Mammalia</taxon>
        <taxon>Eutheria</taxon>
        <taxon>Euarchontoglires</taxon>
        <taxon>Primates</taxon>
        <taxon>Haplorrhini</taxon>
        <taxon>Catarrhini</taxon>
        <taxon>Hominidae</taxon>
        <taxon>Homo</taxon>
    </lineage>
</organism>
<evidence type="ECO:0000250" key="1"/>
<evidence type="ECO:0000250" key="2">
    <source>
        <dbReference type="UniProtKB" id="P51177"/>
    </source>
</evidence>
<evidence type="ECO:0000250" key="3">
    <source>
        <dbReference type="UniProtKB" id="Q8VBV8"/>
    </source>
</evidence>
<evidence type="ECO:0000255" key="4">
    <source>
        <dbReference type="PROSITE-ProRule" id="PRU00448"/>
    </source>
</evidence>
<evidence type="ECO:0000269" key="5">
    <source>
    </source>
</evidence>
<evidence type="ECO:0000269" key="6">
    <source>
    </source>
</evidence>
<evidence type="ECO:0000269" key="7">
    <source>
    </source>
</evidence>
<evidence type="ECO:0000305" key="8"/>
<accession>Q9UMX6</accession>
<accession>Q9NU15</accession>